<dbReference type="EC" id="1.-.-.-" evidence="1"/>
<dbReference type="EMBL" id="EQ962657">
    <property type="protein sequence ID" value="EED15414.1"/>
    <property type="molecule type" value="Genomic_DNA"/>
</dbReference>
<dbReference type="RefSeq" id="XP_002485367.1">
    <property type="nucleotide sequence ID" value="XM_002485322.1"/>
</dbReference>
<dbReference type="SMR" id="B8MKZ8"/>
<dbReference type="STRING" id="441959.B8MKZ8"/>
<dbReference type="GeneID" id="8107036"/>
<dbReference type="VEuPathDB" id="FungiDB:TSTA_048540"/>
<dbReference type="eggNOG" id="ENOG502RZAA">
    <property type="taxonomic scope" value="Eukaryota"/>
</dbReference>
<dbReference type="HOGENOM" id="CLU_042688_2_0_1"/>
<dbReference type="InParanoid" id="B8MKZ8"/>
<dbReference type="OMA" id="REIYFPE"/>
<dbReference type="OrthoDB" id="412788at2759"/>
<dbReference type="PhylomeDB" id="B8MKZ8"/>
<dbReference type="Proteomes" id="UP000001745">
    <property type="component" value="Unassembled WGS sequence"/>
</dbReference>
<dbReference type="GO" id="GO:0016491">
    <property type="term" value="F:oxidoreductase activity"/>
    <property type="evidence" value="ECO:0007669"/>
    <property type="project" value="UniProtKB-KW"/>
</dbReference>
<dbReference type="InterPro" id="IPR044053">
    <property type="entry name" value="AsaB-like"/>
</dbReference>
<dbReference type="NCBIfam" id="NF041278">
    <property type="entry name" value="CmcJ_NvfI_EfuI"/>
    <property type="match status" value="1"/>
</dbReference>
<dbReference type="PANTHER" id="PTHR34598">
    <property type="entry name" value="BLL6449 PROTEIN"/>
    <property type="match status" value="1"/>
</dbReference>
<dbReference type="PANTHER" id="PTHR34598:SF3">
    <property type="entry name" value="OXIDOREDUCTASE AN1597"/>
    <property type="match status" value="1"/>
</dbReference>
<keyword id="KW-0560">Oxidoreductase</keyword>
<keyword id="KW-1185">Reference proteome</keyword>
<proteinExistence type="evidence at protein level"/>
<reference key="1">
    <citation type="journal article" date="2015" name="Genome Announc.">
        <title>Genome sequence of the AIDS-associated pathogen Penicillium marneffei (ATCC18224) and its near taxonomic relative Talaromyces stipitatus (ATCC10500).</title>
        <authorList>
            <person name="Nierman W.C."/>
            <person name="Fedorova-Abrams N.D."/>
            <person name="Andrianopoulos A."/>
        </authorList>
    </citation>
    <scope>NUCLEOTIDE SEQUENCE [LARGE SCALE GENOMIC DNA]</scope>
    <source>
        <strain>ATCC 10500 / CBS 375.48 / QM 6759 / NRRL 1006</strain>
    </source>
</reference>
<reference key="2">
    <citation type="journal article" date="1997" name="J. Antibiot.">
        <title>CP-225,917 and CP-263,114, novel Ras farnesylation inhibitors from an unidentified fungus. I. Taxonomy, fermentation, isolation, and biochemical properties.</title>
        <authorList>
            <person name="Dabrah T.T."/>
            <person name="Harwood H.J. Jr."/>
            <person name="Huang L.H."/>
            <person name="Jankovich N.D."/>
            <person name="Kaneko T."/>
            <person name="Li J.C."/>
            <person name="Lindsey S."/>
            <person name="Moshier P.M."/>
            <person name="Subashi T.A."/>
            <person name="Therrien M."/>
            <person name="Watts P.C."/>
        </authorList>
    </citation>
    <scope>BIOTECHNOLOGY</scope>
</reference>
<reference key="3">
    <citation type="journal article" date="2022" name="J. Am. Chem. Soc.">
        <title>Elucidation of late-stage biosynthesis of phomoidride: proposal of cyclization mechanism affording characteristic nine-membered ring of fungal dimeric anhydride.</title>
        <authorList>
            <person name="Yamamoto S."/>
            <person name="Matsuyama T."/>
            <person name="Ozaki T."/>
            <person name="Takino J."/>
            <person name="Sato H."/>
            <person name="Uchiyama M."/>
            <person name="Minami A."/>
            <person name="Oikawa H."/>
        </authorList>
    </citation>
    <scope>FUNCTION</scope>
    <scope>CATALYTIC ACTIVITY</scope>
    <scope>PATHWAY</scope>
</reference>
<sequence length="277" mass="31657">MPHSNYETPEVILQYFAPNQDGTPPDANDLEIQYGTKNLHLAAVTLNDLRPDKDKITLTDHGLQLINHDTAMSYEDFNDPEKIKSQYYLEVAEAIKKATGAQKVICFNHNVRSEAAPRLDISKHKVDHIGPMRRVHVDVAPRGTYEAVEKRAGEALMSSIRGRWKIINSWKPLKTVQRDPLAIATGPSCPDEDLVELTRYRPDGSLSESRYSVLYDQRHKWYWVPMQKPNEMLLFNQYSDDPNRTLADRVAHCGFTLPGAEDKEIRESVEVRALVIY</sequence>
<gene>
    <name evidence="3" type="primary">tstK</name>
    <name type="ORF">TSTA_048540</name>
</gene>
<feature type="chain" id="PRO_0000458949" description="Alpha-ketoglutarate-dependent dioxygenase tstK">
    <location>
        <begin position="1"/>
        <end position="277"/>
    </location>
</feature>
<comment type="function">
    <text evidence="1">Alpha-ketoglutarate-dependent dioxygenase; part of the gene cluster that mediates the biosynthesis of the antihypercholesterolemic agents phomoidrides which are dimeric anhydrides (PubMed:36374185). Within the pathway, tstK is responsible for the iterative oxidation necessary to convert prephomoidride to phomoidride A (PubMed:36374185). The pathway begins with the highly reducing polyketide synthase tstiA that catalyzes the formation of a C12-fatty acyl-ACP, starting from one acetate and 5 malonate units. The hydrolase tstM is involved in the release of the C12-fatty acyl chain from phiA. The alkylcitrate synthase (ACS) tstJ and the alkylcitrate dehydratase (ACDH) tstI then give rise to decarboxylated monomeric anhydrides by coupling the C12-fatty acyl chain with oxalacetic acid. The cyclase tstC is responsible for the dimerization of the monomeric anhydrides which leads to the production of prephomoidride that contains the characteristic bicyclo[4.3.1]deca-1,6-diene system of phomoidrides. Iterative oxidation catalyzed by the alpha-ketoglutarate-dependent dioxygenase tstK produced then phomoidride A. Finally, the methyltransferase tstE converts phomoidride A to phomoidride B via an acetalization reaction. The phosphatidylethanolamine-binding protein tstB and tstN are not essential for dimerization and their functions have still to be determined (PubMed:36374185).</text>
</comment>
<comment type="catalytic activity">
    <reaction evidence="1">
        <text>2-[(1R,8S,14R,15R)-11-hydroxy-14,15-bis[(6E)-oct-6-en-1-yl]-3,5,9-trioxo-4,10-dioxatetracyclo[9.4.0.0(2,6).0(8,12)]pentadeca-2(6),12-dien-8-yl]acetate + 3 2-oxoglutarate + 3 O2 = phomoidride A + 3 succinate + 3 CO2 + H2O</text>
        <dbReference type="Rhea" id="RHEA:77655"/>
        <dbReference type="ChEBI" id="CHEBI:15377"/>
        <dbReference type="ChEBI" id="CHEBI:15379"/>
        <dbReference type="ChEBI" id="CHEBI:16526"/>
        <dbReference type="ChEBI" id="CHEBI:16810"/>
        <dbReference type="ChEBI" id="CHEBI:30031"/>
        <dbReference type="ChEBI" id="CHEBI:197433"/>
        <dbReference type="ChEBI" id="CHEBI:197434"/>
    </reaction>
    <physiologicalReaction direction="left-to-right" evidence="1">
        <dbReference type="Rhea" id="RHEA:77656"/>
    </physiologicalReaction>
</comment>
<comment type="biotechnology">
    <text evidence="2">Phomoidrides A and B (also known as CP-225,917 and CP-263,114) are potent inhibitors of Ras farnesyltransferase and squalene synthase (PubMed:9066758). CP-225,917 and CP-263,114 inhibit Ras farnesyl transferase from rat brain with IC(50) values of 6 uM and 20 uoM, respectively (PubMed:9066758). CP-225,917 inhibits squalene synthase with an IC(50) value of 43 uM and CP-263,114 with an IC(50) of 160 uM (PubMed:9066758).</text>
</comment>
<comment type="similarity">
    <text evidence="4">Belongs to the asaB hydroxylase/desaturase family.</text>
</comment>
<protein>
    <recommendedName>
        <fullName evidence="3">Alpha-ketoglutarate-dependent dioxygenase tstK</fullName>
        <shortName evidence="3">Alpha-KGDO</shortName>
        <ecNumber evidence="1">1.-.-.-</ecNumber>
    </recommendedName>
    <alternativeName>
        <fullName evidence="3">Phomoidride biosynthesis cluster protein K</fullName>
    </alternativeName>
</protein>
<accession>B8MKZ8</accession>
<organism>
    <name type="scientific">Talaromyces stipitatus (strain ATCC 10500 / CBS 375.48 / QM 6759 / NRRL 1006)</name>
    <name type="common">Penicillium stipitatum</name>
    <dbReference type="NCBI Taxonomy" id="441959"/>
    <lineage>
        <taxon>Eukaryota</taxon>
        <taxon>Fungi</taxon>
        <taxon>Dikarya</taxon>
        <taxon>Ascomycota</taxon>
        <taxon>Pezizomycotina</taxon>
        <taxon>Eurotiomycetes</taxon>
        <taxon>Eurotiomycetidae</taxon>
        <taxon>Eurotiales</taxon>
        <taxon>Trichocomaceae</taxon>
        <taxon>Talaromyces</taxon>
        <taxon>Talaromyces sect. Talaromyces</taxon>
    </lineage>
</organism>
<evidence type="ECO:0000269" key="1">
    <source>
    </source>
</evidence>
<evidence type="ECO:0000269" key="2">
    <source>
    </source>
</evidence>
<evidence type="ECO:0000303" key="3">
    <source>
    </source>
</evidence>
<evidence type="ECO:0000305" key="4"/>
<name>TSTK_TALSN</name>